<accession>A6Q599</accession>
<dbReference type="EMBL" id="AP009178">
    <property type="protein sequence ID" value="BAF70658.1"/>
    <property type="molecule type" value="Genomic_DNA"/>
</dbReference>
<dbReference type="RefSeq" id="WP_012082921.1">
    <property type="nucleotide sequence ID" value="NC_009662.1"/>
</dbReference>
<dbReference type="SMR" id="A6Q599"/>
<dbReference type="STRING" id="387092.NIS_1551"/>
<dbReference type="KEGG" id="nis:NIS_1551"/>
<dbReference type="eggNOG" id="COG0792">
    <property type="taxonomic scope" value="Bacteria"/>
</dbReference>
<dbReference type="HOGENOM" id="CLU_115353_3_2_7"/>
<dbReference type="InParanoid" id="A6Q599"/>
<dbReference type="OrthoDB" id="9794876at2"/>
<dbReference type="Proteomes" id="UP000001118">
    <property type="component" value="Chromosome"/>
</dbReference>
<dbReference type="GO" id="GO:0003676">
    <property type="term" value="F:nucleic acid binding"/>
    <property type="evidence" value="ECO:0007669"/>
    <property type="project" value="InterPro"/>
</dbReference>
<dbReference type="Gene3D" id="3.40.1350.10">
    <property type="match status" value="1"/>
</dbReference>
<dbReference type="HAMAP" id="MF_00048">
    <property type="entry name" value="UPF0102"/>
    <property type="match status" value="1"/>
</dbReference>
<dbReference type="InterPro" id="IPR011335">
    <property type="entry name" value="Restrct_endonuc-II-like"/>
</dbReference>
<dbReference type="InterPro" id="IPR011856">
    <property type="entry name" value="tRNA_endonuc-like_dom_sf"/>
</dbReference>
<dbReference type="InterPro" id="IPR003509">
    <property type="entry name" value="UPF0102_YraN-like"/>
</dbReference>
<dbReference type="NCBIfam" id="NF009152">
    <property type="entry name" value="PRK12497.2-4"/>
    <property type="match status" value="1"/>
</dbReference>
<dbReference type="PANTHER" id="PTHR34039">
    <property type="entry name" value="UPF0102 PROTEIN YRAN"/>
    <property type="match status" value="1"/>
</dbReference>
<dbReference type="PANTHER" id="PTHR34039:SF1">
    <property type="entry name" value="UPF0102 PROTEIN YRAN"/>
    <property type="match status" value="1"/>
</dbReference>
<dbReference type="Pfam" id="PF02021">
    <property type="entry name" value="UPF0102"/>
    <property type="match status" value="1"/>
</dbReference>
<dbReference type="SUPFAM" id="SSF52980">
    <property type="entry name" value="Restriction endonuclease-like"/>
    <property type="match status" value="1"/>
</dbReference>
<evidence type="ECO:0000255" key="1">
    <source>
        <dbReference type="HAMAP-Rule" id="MF_00048"/>
    </source>
</evidence>
<reference key="1">
    <citation type="journal article" date="2007" name="Proc. Natl. Acad. Sci. U.S.A.">
        <title>Deep-sea vent epsilon-proteobacterial genomes provide insights into emergence of pathogens.</title>
        <authorList>
            <person name="Nakagawa S."/>
            <person name="Takaki Y."/>
            <person name="Shimamura S."/>
            <person name="Reysenbach A.-L."/>
            <person name="Takai K."/>
            <person name="Horikoshi K."/>
        </authorList>
    </citation>
    <scope>NUCLEOTIDE SEQUENCE [LARGE SCALE GENOMIC DNA]</scope>
    <source>
        <strain>SB155-2</strain>
    </source>
</reference>
<sequence>MGLKSYLLGRNGEKRAEAFLIKNGFTIREKNFHSRFGEIDIIAQKDGILHFIEVKLSEKSDPVYMITQKKMEKLLLAIEFYMMKNGLELPYQIDGVLIKKNTLEMIENLTIM</sequence>
<proteinExistence type="inferred from homology"/>
<name>Y1551_NITSB</name>
<gene>
    <name type="ordered locus">NIS_1551</name>
</gene>
<comment type="similarity">
    <text evidence="1">Belongs to the UPF0102 family.</text>
</comment>
<feature type="chain" id="PRO_1000009239" description="UPF0102 protein NIS_1551">
    <location>
        <begin position="1"/>
        <end position="112"/>
    </location>
</feature>
<keyword id="KW-1185">Reference proteome</keyword>
<protein>
    <recommendedName>
        <fullName evidence="1">UPF0102 protein NIS_1551</fullName>
    </recommendedName>
</protein>
<organism>
    <name type="scientific">Nitratiruptor sp. (strain SB155-2)</name>
    <dbReference type="NCBI Taxonomy" id="387092"/>
    <lineage>
        <taxon>Bacteria</taxon>
        <taxon>Pseudomonadati</taxon>
        <taxon>Campylobacterota</taxon>
        <taxon>Epsilonproteobacteria</taxon>
        <taxon>Nautiliales</taxon>
        <taxon>Nitratiruptoraceae</taxon>
        <taxon>Nitratiruptor</taxon>
    </lineage>
</organism>